<reference key="1">
    <citation type="journal article" date="1993" name="J. Bacteriol.">
        <title>Flagellin gene transcription in Bordetella bronchiseptica is regulated by the BvgAS virulence control system.</title>
        <authorList>
            <person name="Akerley B.J."/>
            <person name="Miller J.F."/>
        </authorList>
    </citation>
    <scope>NUCLEOTIDE SEQUENCE [GENOMIC DNA]</scope>
</reference>
<reference key="2">
    <citation type="journal article" date="2003" name="Nat. Genet.">
        <title>Comparative analysis of the genome sequences of Bordetella pertussis, Bordetella parapertussis and Bordetella bronchiseptica.</title>
        <authorList>
            <person name="Parkhill J."/>
            <person name="Sebaihia M."/>
            <person name="Preston A."/>
            <person name="Murphy L.D."/>
            <person name="Thomson N.R."/>
            <person name="Harris D.E."/>
            <person name="Holden M.T.G."/>
            <person name="Churcher C.M."/>
            <person name="Bentley S.D."/>
            <person name="Mungall K.L."/>
            <person name="Cerdeno-Tarraga A.-M."/>
            <person name="Temple L."/>
            <person name="James K.D."/>
            <person name="Harris B."/>
            <person name="Quail M.A."/>
            <person name="Achtman M."/>
            <person name="Atkin R."/>
            <person name="Baker S."/>
            <person name="Basham D."/>
            <person name="Bason N."/>
            <person name="Cherevach I."/>
            <person name="Chillingworth T."/>
            <person name="Collins M."/>
            <person name="Cronin A."/>
            <person name="Davis P."/>
            <person name="Doggett J."/>
            <person name="Feltwell T."/>
            <person name="Goble A."/>
            <person name="Hamlin N."/>
            <person name="Hauser H."/>
            <person name="Holroyd S."/>
            <person name="Jagels K."/>
            <person name="Leather S."/>
            <person name="Moule S."/>
            <person name="Norberczak H."/>
            <person name="O'Neil S."/>
            <person name="Ormond D."/>
            <person name="Price C."/>
            <person name="Rabbinowitsch E."/>
            <person name="Rutter S."/>
            <person name="Sanders M."/>
            <person name="Saunders D."/>
            <person name="Seeger K."/>
            <person name="Sharp S."/>
            <person name="Simmonds M."/>
            <person name="Skelton J."/>
            <person name="Squares R."/>
            <person name="Squares S."/>
            <person name="Stevens K."/>
            <person name="Unwin L."/>
            <person name="Whitehead S."/>
            <person name="Barrell B.G."/>
            <person name="Maskell D.J."/>
        </authorList>
    </citation>
    <scope>NUCLEOTIDE SEQUENCE [LARGE SCALE GENOMIC DNA]</scope>
    <source>
        <strain>ATCC BAA-588 / NCTC 13252 / RB50</strain>
    </source>
</reference>
<reference key="3">
    <citation type="journal article" date="1992" name="J. Bacteriol.">
        <title>The bvgAS locus negatively controls motility and synthesis of flagella in Bordetella bronchiseptica.</title>
        <authorList>
            <person name="Akerley B.J."/>
            <person name="Monack D.M."/>
            <person name="Falkow S."/>
            <person name="Miller J.F."/>
        </authorList>
    </citation>
    <scope>PROTEIN SEQUENCE OF 2-21</scope>
    <source>
        <strain>GP1SN</strain>
    </source>
</reference>
<name>FLAA_BORBR</name>
<sequence>MAAVINTNYLSLVAQNNLNKSQSALGSAIERLSSGLRINSAKDDAAGQAIANRFTANVKGLTQAARNANDGISIAQTTEGALNEINNNLQRIRELTVQASNGTNSASDIDSIQQEVNQRLEEINRIAEQTDFNGIKVLKSNATDMTLSIQVGAKDNETIDIKIDRNSNWNLYDAVGTVPGGTVNGEARTVNALGFDVLSAVTTTIASDTVTFDAAVAAAEQAAGAAVGDGSVVSYGDTANPQYAVVVDNAGTMTSYALTFDKDGKAALGDQLGAVASQAAEAAVGTNDVAAGANVTVSGGAADALSKLDDAMKAVDEQRSSLGAIQNRFESTVANLNNTITNLSAARSRIEDSDYATEVSNMTKNQILQQAGTSVLAQANQVPQNVLSLLR</sequence>
<comment type="function">
    <text>Flagellin is the subunit protein which polymerizes to form the filaments of bacterial flagella.</text>
</comment>
<comment type="subcellular location">
    <subcellularLocation>
        <location>Secreted</location>
    </subcellularLocation>
    <subcellularLocation>
        <location>Bacterial flagellum</location>
    </subcellularLocation>
</comment>
<comment type="similarity">
    <text evidence="2">Belongs to the bacterial flagellin family.</text>
</comment>
<accession>Q06064</accession>
<accession>Q9R5P5</accession>
<keyword id="KW-0975">Bacterial flagellum</keyword>
<keyword id="KW-0903">Direct protein sequencing</keyword>
<keyword id="KW-0964">Secreted</keyword>
<feature type="initiator methionine" description="Removed" evidence="1">
    <location>
        <position position="1"/>
    </location>
</feature>
<feature type="chain" id="PRO_0000182589" description="Flagellin">
    <location>
        <begin position="2"/>
        <end position="391"/>
    </location>
</feature>
<proteinExistence type="evidence at protein level"/>
<dbReference type="EMBL" id="L13034">
    <property type="protein sequence ID" value="AAA22977.1"/>
    <property type="molecule type" value="Genomic_DNA"/>
</dbReference>
<dbReference type="EMBL" id="BX640444">
    <property type="protein sequence ID" value="CAE33033.1"/>
    <property type="molecule type" value="Genomic_DNA"/>
</dbReference>
<dbReference type="PIR" id="A40594">
    <property type="entry name" value="A40594"/>
</dbReference>
<dbReference type="RefSeq" id="WP_010926554.1">
    <property type="nucleotide sequence ID" value="NC_002927.3"/>
</dbReference>
<dbReference type="SMR" id="Q06064"/>
<dbReference type="KEGG" id="bbr:BB2539"/>
<dbReference type="eggNOG" id="COG1344">
    <property type="taxonomic scope" value="Bacteria"/>
</dbReference>
<dbReference type="HOGENOM" id="CLU_011142_7_2_4"/>
<dbReference type="Proteomes" id="UP000001027">
    <property type="component" value="Chromosome"/>
</dbReference>
<dbReference type="GO" id="GO:0009288">
    <property type="term" value="C:bacterial-type flagellum"/>
    <property type="evidence" value="ECO:0007669"/>
    <property type="project" value="UniProtKB-SubCell"/>
</dbReference>
<dbReference type="GO" id="GO:0005576">
    <property type="term" value="C:extracellular region"/>
    <property type="evidence" value="ECO:0007669"/>
    <property type="project" value="UniProtKB-SubCell"/>
</dbReference>
<dbReference type="GO" id="GO:0005198">
    <property type="term" value="F:structural molecule activity"/>
    <property type="evidence" value="ECO:0007669"/>
    <property type="project" value="InterPro"/>
</dbReference>
<dbReference type="Gene3D" id="2.60.40.4390">
    <property type="match status" value="1"/>
</dbReference>
<dbReference type="Gene3D" id="6.10.280.190">
    <property type="match status" value="1"/>
</dbReference>
<dbReference type="Gene3D" id="1.20.1330.10">
    <property type="entry name" value="f41 fragment of flagellin, N-terminal domain"/>
    <property type="match status" value="1"/>
</dbReference>
<dbReference type="Gene3D" id="6.10.10.10">
    <property type="entry name" value="Flagellar export chaperone, C-terminal domain"/>
    <property type="match status" value="1"/>
</dbReference>
<dbReference type="InterPro" id="IPR001492">
    <property type="entry name" value="Flagellin"/>
</dbReference>
<dbReference type="InterPro" id="IPR046358">
    <property type="entry name" value="Flagellin_C"/>
</dbReference>
<dbReference type="InterPro" id="IPR042187">
    <property type="entry name" value="Flagellin_C_sub2"/>
</dbReference>
<dbReference type="InterPro" id="IPR001029">
    <property type="entry name" value="Flagellin_N"/>
</dbReference>
<dbReference type="NCBIfam" id="NF005294">
    <property type="entry name" value="PRK06819.1"/>
    <property type="match status" value="1"/>
</dbReference>
<dbReference type="PANTHER" id="PTHR42792">
    <property type="entry name" value="FLAGELLIN"/>
    <property type="match status" value="1"/>
</dbReference>
<dbReference type="PANTHER" id="PTHR42792:SF2">
    <property type="entry name" value="FLAGELLIN"/>
    <property type="match status" value="1"/>
</dbReference>
<dbReference type="Pfam" id="PF00700">
    <property type="entry name" value="Flagellin_C"/>
    <property type="match status" value="1"/>
</dbReference>
<dbReference type="Pfam" id="PF00669">
    <property type="entry name" value="Flagellin_N"/>
    <property type="match status" value="1"/>
</dbReference>
<dbReference type="PRINTS" id="PR00207">
    <property type="entry name" value="FLAGELLIN"/>
</dbReference>
<dbReference type="SUPFAM" id="SSF64518">
    <property type="entry name" value="Phase 1 flagellin"/>
    <property type="match status" value="1"/>
</dbReference>
<evidence type="ECO:0000250" key="1"/>
<evidence type="ECO:0000305" key="2"/>
<protein>
    <recommendedName>
        <fullName>Flagellin</fullName>
    </recommendedName>
</protein>
<gene>
    <name type="primary">flaA</name>
    <name type="ordered locus">BB2539</name>
</gene>
<organism>
    <name type="scientific">Bordetella bronchiseptica (strain ATCC BAA-588 / NCTC 13252 / RB50)</name>
    <name type="common">Alcaligenes bronchisepticus</name>
    <dbReference type="NCBI Taxonomy" id="257310"/>
    <lineage>
        <taxon>Bacteria</taxon>
        <taxon>Pseudomonadati</taxon>
        <taxon>Pseudomonadota</taxon>
        <taxon>Betaproteobacteria</taxon>
        <taxon>Burkholderiales</taxon>
        <taxon>Alcaligenaceae</taxon>
        <taxon>Bordetella</taxon>
    </lineage>
</organism>